<reference key="1">
    <citation type="journal article" date="1996" name="J. Cereb. Blood Flow Metab.">
        <title>Increased expression of endothelin B receptor mRNA following subarachnoid hemorrhage in monkeys.</title>
        <authorList>
            <person name="Hino A."/>
            <person name="Tokuyama Y."/>
            <person name="Kobayashi M."/>
            <person name="Yano M."/>
            <person name="Weir B."/>
            <person name="Takeda J."/>
            <person name="Wang X."/>
            <person name="Bell G.I."/>
            <person name="Macdonald R.L."/>
        </authorList>
    </citation>
    <scope>NUCLEOTIDE SEQUENCE [MRNA]</scope>
</reference>
<gene>
    <name type="primary">EDN1</name>
</gene>
<comment type="function">
    <text evidence="1 2 3">Endothelins are endothelium-derived vasoconstrictor peptides (By similarity). Probable ligand for G-protein coupled receptors EDNRA and EDNRB which activates PTK2B, BCAR1, BCAR3 and, GTPases RAP1 and RHOA cascade in glomerular mesangial cells (By similarity). Also binds the DEAR/FBXW7-AS1 receptor (By similarity). Promotes mesenteric arterial wall remodeling via activation of ROCK signaling and subsequent colocalization of NFATC3 with F-actin filaments (By similarity). NFATC3 then translocates to the nucleus where it subsequently promotes the transcription of the smooth muscle hypertrophy and differentiation marker ACTA2 (By similarity).</text>
</comment>
<comment type="subcellular location">
    <subcellularLocation>
        <location>Secreted</location>
    </subcellularLocation>
</comment>
<comment type="similarity">
    <text evidence="4">Belongs to the endothelin/sarafotoxin family.</text>
</comment>
<name>EDN1_MACFA</name>
<proteinExistence type="evidence at transcript level"/>
<feature type="chain" id="PRO_0000146840" description="Endothelin-1">
    <location>
        <begin position="1" status="less than"/>
        <end position="76" status="greater than"/>
    </location>
</feature>
<feature type="region of interest" description="Endothelin-like">
    <location>
        <begin position="30"/>
        <end position="44"/>
    </location>
</feature>
<feature type="non-terminal residue">
    <location>
        <position position="1"/>
    </location>
</feature>
<feature type="non-terminal residue">
    <location>
        <position position="76"/>
    </location>
</feature>
<sequence length="76" mass="8625">VVPYGLGSPRSKRALENLLPTKATDRENRCQCASQKDKKCWNFCQAGKELRAKDLMEKGWNNHKKGKDCSKLGKKC</sequence>
<evidence type="ECO:0000250" key="1">
    <source>
        <dbReference type="UniProtKB" id="P05305"/>
    </source>
</evidence>
<evidence type="ECO:0000250" key="2">
    <source>
        <dbReference type="UniProtKB" id="P09558"/>
    </source>
</evidence>
<evidence type="ECO:0000250" key="3">
    <source>
        <dbReference type="UniProtKB" id="P22387"/>
    </source>
</evidence>
<evidence type="ECO:0000305" key="4"/>
<dbReference type="EMBL" id="U20579">
    <property type="protein sequence ID" value="AAA62438.1"/>
    <property type="molecule type" value="Genomic_DNA"/>
</dbReference>
<dbReference type="PIR" id="G02934">
    <property type="entry name" value="G02934"/>
</dbReference>
<dbReference type="STRING" id="9541.ENSMFAP00000007622"/>
<dbReference type="eggNOG" id="ENOG502S1NV">
    <property type="taxonomic scope" value="Eukaryota"/>
</dbReference>
<dbReference type="Proteomes" id="UP000233100">
    <property type="component" value="Unplaced"/>
</dbReference>
<dbReference type="GO" id="GO:0005615">
    <property type="term" value="C:extracellular space"/>
    <property type="evidence" value="ECO:0007669"/>
    <property type="project" value="TreeGrafter"/>
</dbReference>
<dbReference type="GO" id="GO:0031707">
    <property type="term" value="F:endothelin A receptor binding"/>
    <property type="evidence" value="ECO:0007669"/>
    <property type="project" value="TreeGrafter"/>
</dbReference>
<dbReference type="GO" id="GO:0031708">
    <property type="term" value="F:endothelin B receptor binding"/>
    <property type="evidence" value="ECO:0007669"/>
    <property type="project" value="TreeGrafter"/>
</dbReference>
<dbReference type="GO" id="GO:0005179">
    <property type="term" value="F:hormone activity"/>
    <property type="evidence" value="ECO:0007669"/>
    <property type="project" value="TreeGrafter"/>
</dbReference>
<dbReference type="GO" id="GO:0086100">
    <property type="term" value="P:endothelin receptor signaling pathway"/>
    <property type="evidence" value="ECO:0000250"/>
    <property type="project" value="UniProtKB"/>
</dbReference>
<dbReference type="GO" id="GO:0006874">
    <property type="term" value="P:intracellular calcium ion homeostasis"/>
    <property type="evidence" value="ECO:0007669"/>
    <property type="project" value="TreeGrafter"/>
</dbReference>
<dbReference type="GO" id="GO:1900182">
    <property type="term" value="P:positive regulation of protein localization to nucleus"/>
    <property type="evidence" value="ECO:0000250"/>
    <property type="project" value="UniProtKB"/>
</dbReference>
<dbReference type="GO" id="GO:0003100">
    <property type="term" value="P:regulation of systemic arterial blood pressure by endothelin"/>
    <property type="evidence" value="ECO:0007669"/>
    <property type="project" value="TreeGrafter"/>
</dbReference>
<dbReference type="GO" id="GO:0019229">
    <property type="term" value="P:regulation of vasoconstriction"/>
    <property type="evidence" value="ECO:0007669"/>
    <property type="project" value="InterPro"/>
</dbReference>
<dbReference type="GO" id="GO:0014826">
    <property type="term" value="P:vein smooth muscle contraction"/>
    <property type="evidence" value="ECO:0007669"/>
    <property type="project" value="TreeGrafter"/>
</dbReference>
<dbReference type="InterPro" id="IPR020475">
    <property type="entry name" value="Endothelin"/>
</dbReference>
<dbReference type="InterPro" id="IPR019764">
    <property type="entry name" value="Endothelin_toxin_CS"/>
</dbReference>
<dbReference type="InterPro" id="IPR001928">
    <property type="entry name" value="Endothln-like_toxin"/>
</dbReference>
<dbReference type="PANTHER" id="PTHR13874">
    <property type="entry name" value="ENDOTHELIN"/>
    <property type="match status" value="1"/>
</dbReference>
<dbReference type="PANTHER" id="PTHR13874:SF10">
    <property type="entry name" value="ENDOTHELIN-1"/>
    <property type="match status" value="1"/>
</dbReference>
<dbReference type="SMART" id="SM00272">
    <property type="entry name" value="END"/>
    <property type="match status" value="1"/>
</dbReference>
<dbReference type="PROSITE" id="PS00270">
    <property type="entry name" value="ENDOTHELIN"/>
    <property type="match status" value="1"/>
</dbReference>
<protein>
    <recommendedName>
        <fullName>Endothelin-1</fullName>
        <shortName>ET-1</shortName>
    </recommendedName>
</protein>
<accession>Q28469</accession>
<keyword id="KW-0165">Cleavage on pair of basic residues</keyword>
<keyword id="KW-1185">Reference proteome</keyword>
<keyword id="KW-0964">Secreted</keyword>
<keyword id="KW-0838">Vasoactive</keyword>
<keyword id="KW-0839">Vasoconstrictor</keyword>
<organism>
    <name type="scientific">Macaca fascicularis</name>
    <name type="common">Crab-eating macaque</name>
    <name type="synonym">Cynomolgus monkey</name>
    <dbReference type="NCBI Taxonomy" id="9541"/>
    <lineage>
        <taxon>Eukaryota</taxon>
        <taxon>Metazoa</taxon>
        <taxon>Chordata</taxon>
        <taxon>Craniata</taxon>
        <taxon>Vertebrata</taxon>
        <taxon>Euteleostomi</taxon>
        <taxon>Mammalia</taxon>
        <taxon>Eutheria</taxon>
        <taxon>Euarchontoglires</taxon>
        <taxon>Primates</taxon>
        <taxon>Haplorrhini</taxon>
        <taxon>Catarrhini</taxon>
        <taxon>Cercopithecidae</taxon>
        <taxon>Cercopithecinae</taxon>
        <taxon>Macaca</taxon>
    </lineage>
</organism>